<proteinExistence type="inferred from homology"/>
<name>EMC3_YEAS7</name>
<accession>A7A082</accession>
<keyword id="KW-0256">Endoplasmic reticulum</keyword>
<keyword id="KW-0472">Membrane</keyword>
<keyword id="KW-0812">Transmembrane</keyword>
<keyword id="KW-1133">Transmembrane helix</keyword>
<protein>
    <recommendedName>
        <fullName>ER membrane protein complex subunit 3</fullName>
    </recommendedName>
    <alternativeName>
        <fullName>Altered inheritance rate of mitochondria protein 27</fullName>
    </alternativeName>
</protein>
<dbReference type="EMBL" id="AAFW02000153">
    <property type="protein sequence ID" value="EDN59821.1"/>
    <property type="status" value="ALT_INIT"/>
    <property type="molecule type" value="Genomic_DNA"/>
</dbReference>
<dbReference type="SMR" id="A7A082"/>
<dbReference type="HOGENOM" id="CLU_060791_0_0_1"/>
<dbReference type="OrthoDB" id="37941at4893"/>
<dbReference type="Proteomes" id="UP000007060">
    <property type="component" value="Unassembled WGS sequence"/>
</dbReference>
<dbReference type="GO" id="GO:0072546">
    <property type="term" value="C:EMC complex"/>
    <property type="evidence" value="ECO:0007669"/>
    <property type="project" value="TreeGrafter"/>
</dbReference>
<dbReference type="GO" id="GO:0034975">
    <property type="term" value="P:protein folding in endoplasmic reticulum"/>
    <property type="evidence" value="ECO:0007669"/>
    <property type="project" value="TreeGrafter"/>
</dbReference>
<dbReference type="InterPro" id="IPR008568">
    <property type="entry name" value="EMC3"/>
</dbReference>
<dbReference type="InterPro" id="IPR002809">
    <property type="entry name" value="EMC3/TMCO1"/>
</dbReference>
<dbReference type="PANTHER" id="PTHR13116">
    <property type="entry name" value="ER MEMBRANE PROTEIN COMPLEX SUBUNIT 3"/>
    <property type="match status" value="1"/>
</dbReference>
<dbReference type="PANTHER" id="PTHR13116:SF5">
    <property type="entry name" value="ER MEMBRANE PROTEIN COMPLEX SUBUNIT 3"/>
    <property type="match status" value="1"/>
</dbReference>
<dbReference type="Pfam" id="PF01956">
    <property type="entry name" value="EMC3_TMCO1"/>
    <property type="match status" value="1"/>
</dbReference>
<dbReference type="PIRSF" id="PIRSF010045">
    <property type="entry name" value="DUF850_TM_euk"/>
    <property type="match status" value="1"/>
</dbReference>
<dbReference type="SMART" id="SM01415">
    <property type="entry name" value="DUF106"/>
    <property type="match status" value="1"/>
</dbReference>
<sequence length="253" mass="28352">MLLDDQLKYWVLLPISIVMVLTGVLKQYIMTLITGSSANEAQPRVKLTEWQYLQWAQLLIGNGGNLSSDAFAAKKEFLVKDLTEERHLAKAKQQDGSQAGEVPNPFNDPSMSNAMMNMAKGNMASFIPQTIIMWWVNHFFAGFILMQLPFPLTAKFKEMLQTGIICQDLDVRWVSSISWYFISVLGLNPVYNLIGLNDQDMGIQAGIGGPQGPQGPPQSQVDKAMHAMANDLTIIQHETCLDNVEQRVLKQYM</sequence>
<reference key="1">
    <citation type="journal article" date="2007" name="Proc. Natl. Acad. Sci. U.S.A.">
        <title>Genome sequencing and comparative analysis of Saccharomyces cerevisiae strain YJM789.</title>
        <authorList>
            <person name="Wei W."/>
            <person name="McCusker J.H."/>
            <person name="Hyman R.W."/>
            <person name="Jones T."/>
            <person name="Ning Y."/>
            <person name="Cao Z."/>
            <person name="Gu Z."/>
            <person name="Bruno D."/>
            <person name="Miranda M."/>
            <person name="Nguyen M."/>
            <person name="Wilhelmy J."/>
            <person name="Komp C."/>
            <person name="Tamse R."/>
            <person name="Wang X."/>
            <person name="Jia P."/>
            <person name="Luedi P."/>
            <person name="Oefner P.J."/>
            <person name="David L."/>
            <person name="Dietrich F.S."/>
            <person name="Li Y."/>
            <person name="Davis R.W."/>
            <person name="Steinmetz L.M."/>
        </authorList>
    </citation>
    <scope>NUCLEOTIDE SEQUENCE [LARGE SCALE GENOMIC DNA]</scope>
    <source>
        <strain>YJM789</strain>
    </source>
</reference>
<organism>
    <name type="scientific">Saccharomyces cerevisiae (strain YJM789)</name>
    <name type="common">Baker's yeast</name>
    <dbReference type="NCBI Taxonomy" id="307796"/>
    <lineage>
        <taxon>Eukaryota</taxon>
        <taxon>Fungi</taxon>
        <taxon>Dikarya</taxon>
        <taxon>Ascomycota</taxon>
        <taxon>Saccharomycotina</taxon>
        <taxon>Saccharomycetes</taxon>
        <taxon>Saccharomycetales</taxon>
        <taxon>Saccharomycetaceae</taxon>
        <taxon>Saccharomyces</taxon>
    </lineage>
</organism>
<evidence type="ECO:0000250" key="1"/>
<evidence type="ECO:0000255" key="2"/>
<evidence type="ECO:0000305" key="3"/>
<gene>
    <name type="primary">AIM27</name>
    <name type="synonym">EMC3</name>
    <name type="ORF">SCY_3492</name>
</gene>
<feature type="chain" id="PRO_0000377675" description="ER membrane protein complex subunit 3">
    <location>
        <begin position="1"/>
        <end position="253"/>
    </location>
</feature>
<feature type="transmembrane region" description="Helical" evidence="2">
    <location>
        <begin position="10"/>
        <end position="30"/>
    </location>
</feature>
<feature type="transmembrane region" description="Helical" evidence="2">
    <location>
        <begin position="126"/>
        <end position="146"/>
    </location>
</feature>
<feature type="transmembrane region" description="Helical" evidence="2">
    <location>
        <begin position="176"/>
        <end position="196"/>
    </location>
</feature>
<comment type="function">
    <text evidence="1">The EMC seems to be required for efficient folding of proteins in the endoplasmic reticulum (ER).</text>
</comment>
<comment type="subunit">
    <text evidence="1">Component of the ER membrane protein complex (EMC), which is composed of EMC1, EMC2, EMC3, EMC4, EMC5 and EMC6.</text>
</comment>
<comment type="subcellular location">
    <subcellularLocation>
        <location evidence="1">Endoplasmic reticulum membrane</location>
        <topology evidence="1">Multi-pass membrane protein</topology>
    </subcellularLocation>
</comment>
<comment type="similarity">
    <text evidence="3">Belongs to the EMC3 family.</text>
</comment>
<comment type="sequence caution" evidence="3">
    <conflict type="erroneous initiation">
        <sequence resource="EMBL-CDS" id="EDN59821"/>
    </conflict>
</comment>